<sequence>MCDIEEATNQLLDVNLHENQKSVQVTESDLGSESELLVTIGATVPTGFEQTAADEVREKLGSSCKISRDRGKIYFVISVESLAQVHCLRSVDNLFVVVQEFQDYQFKQTKEEVLKDFEDLAGKLPWSNPLKVWKINASFKKKKAKRKKINQNSSKEKINNGQEVKIDQRNVKKEFTSHALDSHILDYYENPAIKEDVSTLIGDDLASCKDETDESSKEETEPQVLKFRVTCNRAGEKHCFTSNEAARDFGGAVQDYFKWKADMTNFDVEVLLNIHDNEVIVGIALTEESLHRRNITHFGPTTLRSTLAYGMLRLCDPLPYDIIVDPMCGTGAIPIEGATEWSDCFHIAGDNNPLAVNRAANNIASLLTKSQIKEGKPSWGLPIDAVQWDICNLPLRTGSVDIIVTDLPFGKRMGSKKRNWNLYPACLREMSRVCTPTTGRAVLLTQDTKCFTKALSGMRHVWRKVDTVWVNVGGLRAAVYVLIRTPQAFVHPSEQDGERGTLWQCKE</sequence>
<proteinExistence type="evidence at protein level"/>
<protein>
    <recommendedName>
        <fullName evidence="8">tRNA (guanine(6)-N(2))-methyltransferase THUMP3</fullName>
        <ecNumber evidence="3">2.1.1.256</ecNumber>
    </recommendedName>
    <alternativeName>
        <fullName evidence="6 9">THUMP domain-containing protein 3</fullName>
    </alternativeName>
    <alternativeName>
        <fullName evidence="8">tRNA(Trp) (guanine(7)-N(2))-methyltransferase THUMP3</fullName>
        <ecNumber evidence="3 5">2.1.1.-</ecNumber>
    </alternativeName>
</protein>
<feature type="chain" id="PRO_0000259769" description="tRNA (guanine(6)-N(2))-methyltransferase THUMP3">
    <location>
        <begin position="1"/>
        <end position="507"/>
    </location>
</feature>
<feature type="domain" description="THUMP" evidence="1">
    <location>
        <begin position="165"/>
        <end position="285"/>
    </location>
</feature>
<feature type="sequence variant" id="VAR_028976" description="In dbSNP:rs1129174." evidence="2">
    <original>R</original>
    <variation>Q</variation>
    <location>
        <position position="459"/>
    </location>
</feature>
<feature type="sequence conflict" description="In Ref. 1; BAA91832." evidence="7" ref="1">
    <original>R</original>
    <variation>S</variation>
    <location>
        <position position="499"/>
    </location>
</feature>
<dbReference type="EC" id="2.1.1.256" evidence="3"/>
<dbReference type="EC" id="2.1.1.-" evidence="3 5"/>
<dbReference type="EMBL" id="AK001680">
    <property type="protein sequence ID" value="BAA91832.1"/>
    <property type="molecule type" value="mRNA"/>
</dbReference>
<dbReference type="EMBL" id="AK023263">
    <property type="protein sequence ID" value="BAB14495.1"/>
    <property type="molecule type" value="mRNA"/>
</dbReference>
<dbReference type="EMBL" id="BC001622">
    <property type="protein sequence ID" value="AAH01622.1"/>
    <property type="molecule type" value="mRNA"/>
</dbReference>
<dbReference type="EMBL" id="BC010421">
    <property type="protein sequence ID" value="AAH10421.1"/>
    <property type="molecule type" value="mRNA"/>
</dbReference>
<dbReference type="EMBL" id="AL117483">
    <property type="protein sequence ID" value="CAB55956.1"/>
    <property type="molecule type" value="mRNA"/>
</dbReference>
<dbReference type="CCDS" id="CCDS2573.1"/>
<dbReference type="PIR" id="T17266">
    <property type="entry name" value="T17266"/>
</dbReference>
<dbReference type="RefSeq" id="NP_001107564.1">
    <property type="nucleotide sequence ID" value="NM_001114092.2"/>
</dbReference>
<dbReference type="RefSeq" id="NP_056268.2">
    <property type="nucleotide sequence ID" value="NM_015453.3"/>
</dbReference>
<dbReference type="RefSeq" id="XP_005265078.1">
    <property type="nucleotide sequence ID" value="XM_005265021.5"/>
</dbReference>
<dbReference type="RefSeq" id="XP_005265079.1">
    <property type="nucleotide sequence ID" value="XM_005265022.5"/>
</dbReference>
<dbReference type="RefSeq" id="XP_005265080.1">
    <property type="nucleotide sequence ID" value="XM_005265023.4"/>
</dbReference>
<dbReference type="RefSeq" id="XP_005265081.1">
    <property type="nucleotide sequence ID" value="XM_005265024.4"/>
</dbReference>
<dbReference type="RefSeq" id="XP_006713149.1">
    <property type="nucleotide sequence ID" value="XM_006713086.4"/>
</dbReference>
<dbReference type="RefSeq" id="XP_011531872.1">
    <property type="nucleotide sequence ID" value="XM_011533570.3"/>
</dbReference>
<dbReference type="RefSeq" id="XP_054202066.1">
    <property type="nucleotide sequence ID" value="XM_054346091.1"/>
</dbReference>
<dbReference type="RefSeq" id="XP_054202067.1">
    <property type="nucleotide sequence ID" value="XM_054346092.1"/>
</dbReference>
<dbReference type="RefSeq" id="XP_054202068.1">
    <property type="nucleotide sequence ID" value="XM_054346093.1"/>
</dbReference>
<dbReference type="RefSeq" id="XP_054202069.1">
    <property type="nucleotide sequence ID" value="XM_054346094.1"/>
</dbReference>
<dbReference type="RefSeq" id="XP_054202070.1">
    <property type="nucleotide sequence ID" value="XM_054346095.1"/>
</dbReference>
<dbReference type="SMR" id="Q9BV44"/>
<dbReference type="BioGRID" id="117420">
    <property type="interactions" value="105"/>
</dbReference>
<dbReference type="ComplexPortal" id="CPX-2486">
    <property type="entry name" value="THUMPD3-TRM112 methyltransferase complex"/>
</dbReference>
<dbReference type="FunCoup" id="Q9BV44">
    <property type="interactions" value="3612"/>
</dbReference>
<dbReference type="IntAct" id="Q9BV44">
    <property type="interactions" value="46"/>
</dbReference>
<dbReference type="STRING" id="9606.ENSP00000339532"/>
<dbReference type="GlyGen" id="Q9BV44">
    <property type="glycosylation" value="1 site, 1 O-linked glycan (1 site)"/>
</dbReference>
<dbReference type="iPTMnet" id="Q9BV44"/>
<dbReference type="PhosphoSitePlus" id="Q9BV44"/>
<dbReference type="BioMuta" id="THUMPD3"/>
<dbReference type="DMDM" id="74733286"/>
<dbReference type="jPOST" id="Q9BV44"/>
<dbReference type="MassIVE" id="Q9BV44"/>
<dbReference type="PaxDb" id="9606-ENSP00000339532"/>
<dbReference type="PeptideAtlas" id="Q9BV44"/>
<dbReference type="ProteomicsDB" id="79168"/>
<dbReference type="Pumba" id="Q9BV44"/>
<dbReference type="Antibodypedia" id="25366">
    <property type="antibodies" value="136 antibodies from 26 providers"/>
</dbReference>
<dbReference type="DNASU" id="25917"/>
<dbReference type="Ensembl" id="ENST00000345094.7">
    <property type="protein sequence ID" value="ENSP00000339532.3"/>
    <property type="gene ID" value="ENSG00000134077.16"/>
</dbReference>
<dbReference type="Ensembl" id="ENST00000452837.7">
    <property type="protein sequence ID" value="ENSP00000395893.2"/>
    <property type="gene ID" value="ENSG00000134077.16"/>
</dbReference>
<dbReference type="Ensembl" id="ENST00000515662.6">
    <property type="protein sequence ID" value="ENSP00000424064.1"/>
    <property type="gene ID" value="ENSG00000134077.16"/>
</dbReference>
<dbReference type="GeneID" id="25917"/>
<dbReference type="KEGG" id="hsa:25917"/>
<dbReference type="MANE-Select" id="ENST00000452837.7">
    <property type="protein sequence ID" value="ENSP00000395893.2"/>
    <property type="RefSeq nucleotide sequence ID" value="NM_001114092.2"/>
    <property type="RefSeq protein sequence ID" value="NP_001107564.1"/>
</dbReference>
<dbReference type="UCSC" id="uc003brn.5">
    <property type="organism name" value="human"/>
</dbReference>
<dbReference type="AGR" id="HGNC:24493"/>
<dbReference type="CTD" id="25917"/>
<dbReference type="DisGeNET" id="25917"/>
<dbReference type="GeneCards" id="THUMPD3"/>
<dbReference type="HGNC" id="HGNC:24493">
    <property type="gene designation" value="THUMPD3"/>
</dbReference>
<dbReference type="HPA" id="ENSG00000134077">
    <property type="expression patterns" value="Low tissue specificity"/>
</dbReference>
<dbReference type="neXtProt" id="NX_Q9BV44"/>
<dbReference type="OpenTargets" id="ENSG00000134077"/>
<dbReference type="PharmGKB" id="PA134969445"/>
<dbReference type="VEuPathDB" id="HostDB:ENSG00000134077"/>
<dbReference type="eggNOG" id="ENOG502QSE5">
    <property type="taxonomic scope" value="Eukaryota"/>
</dbReference>
<dbReference type="GeneTree" id="ENSGT00530000063557"/>
<dbReference type="HOGENOM" id="CLU_045692_0_0_1"/>
<dbReference type="InParanoid" id="Q9BV44"/>
<dbReference type="OMA" id="PIDAIQW"/>
<dbReference type="OrthoDB" id="47730at2759"/>
<dbReference type="PAN-GO" id="Q9BV44">
    <property type="GO annotations" value="2 GO annotations based on evolutionary models"/>
</dbReference>
<dbReference type="PhylomeDB" id="Q9BV44"/>
<dbReference type="TreeFam" id="TF313093"/>
<dbReference type="PathwayCommons" id="Q9BV44"/>
<dbReference type="SignaLink" id="Q9BV44"/>
<dbReference type="BioGRID-ORCS" id="25917">
    <property type="hits" value="9 hits in 1158 CRISPR screens"/>
</dbReference>
<dbReference type="ChiTaRS" id="THUMPD3">
    <property type="organism name" value="human"/>
</dbReference>
<dbReference type="GenomeRNAi" id="25917"/>
<dbReference type="Pharos" id="Q9BV44">
    <property type="development level" value="Tdark"/>
</dbReference>
<dbReference type="PRO" id="PR:Q9BV44"/>
<dbReference type="Proteomes" id="UP000005640">
    <property type="component" value="Chromosome 3"/>
</dbReference>
<dbReference type="RNAct" id="Q9BV44">
    <property type="molecule type" value="protein"/>
</dbReference>
<dbReference type="Bgee" id="ENSG00000134077">
    <property type="expression patterns" value="Expressed in sperm and 183 other cell types or tissues"/>
</dbReference>
<dbReference type="ExpressionAtlas" id="Q9BV44">
    <property type="expression patterns" value="baseline and differential"/>
</dbReference>
<dbReference type="GO" id="GO:0005737">
    <property type="term" value="C:cytoplasm"/>
    <property type="evidence" value="ECO:0000314"/>
    <property type="project" value="UniProtKB"/>
</dbReference>
<dbReference type="GO" id="GO:0005829">
    <property type="term" value="C:cytosol"/>
    <property type="evidence" value="ECO:0000314"/>
    <property type="project" value="HPA"/>
</dbReference>
<dbReference type="GO" id="GO:0005730">
    <property type="term" value="C:nucleolus"/>
    <property type="evidence" value="ECO:0000314"/>
    <property type="project" value="HPA"/>
</dbReference>
<dbReference type="GO" id="GO:0043527">
    <property type="term" value="C:tRNA methyltransferase complex"/>
    <property type="evidence" value="ECO:0000314"/>
    <property type="project" value="UniProtKB"/>
</dbReference>
<dbReference type="GO" id="GO:0160117">
    <property type="term" value="F:tRNA (guanine(6)-N2)-methyltransferase activity"/>
    <property type="evidence" value="ECO:0000314"/>
    <property type="project" value="UniProtKB"/>
</dbReference>
<dbReference type="GO" id="GO:0160118">
    <property type="term" value="F:tRNA (guanine(7)-N2)-methyltransferase activity"/>
    <property type="evidence" value="ECO:0000315"/>
    <property type="project" value="UniProtKB"/>
</dbReference>
<dbReference type="GO" id="GO:0016423">
    <property type="term" value="F:tRNA (guanine) methyltransferase activity"/>
    <property type="evidence" value="ECO:0000318"/>
    <property type="project" value="GO_Central"/>
</dbReference>
<dbReference type="GO" id="GO:0000049">
    <property type="term" value="F:tRNA binding"/>
    <property type="evidence" value="ECO:0007669"/>
    <property type="project" value="UniProtKB-KW"/>
</dbReference>
<dbReference type="GO" id="GO:0030488">
    <property type="term" value="P:tRNA methylation"/>
    <property type="evidence" value="ECO:0000315"/>
    <property type="project" value="UniProtKB"/>
</dbReference>
<dbReference type="CDD" id="cd11715">
    <property type="entry name" value="THUMP_AdoMetMT"/>
    <property type="match status" value="1"/>
</dbReference>
<dbReference type="FunFam" id="3.40.50.150:FF:000073">
    <property type="entry name" value="THUMP domain containing 3"/>
    <property type="match status" value="1"/>
</dbReference>
<dbReference type="FunFam" id="3.30.2130.30:FF:000004">
    <property type="entry name" value="THUMP domain-containing protein 3 isoform X1"/>
    <property type="match status" value="1"/>
</dbReference>
<dbReference type="FunFam" id="3.30.2130.30:FF:000007">
    <property type="entry name" value="THUMP domain-containing protein 3 isoform X1"/>
    <property type="match status" value="1"/>
</dbReference>
<dbReference type="Gene3D" id="3.30.2130.30">
    <property type="match status" value="2"/>
</dbReference>
<dbReference type="Gene3D" id="3.40.50.150">
    <property type="entry name" value="Vaccinia Virus protein VP39"/>
    <property type="match status" value="1"/>
</dbReference>
<dbReference type="InterPro" id="IPR000241">
    <property type="entry name" value="RlmKL-like_Mtase"/>
</dbReference>
<dbReference type="InterPro" id="IPR053943">
    <property type="entry name" value="RlmKL-like_Mtase_CS"/>
</dbReference>
<dbReference type="InterPro" id="IPR029063">
    <property type="entry name" value="SAM-dependent_MTases_sf"/>
</dbReference>
<dbReference type="InterPro" id="IPR004114">
    <property type="entry name" value="THUMP_dom"/>
</dbReference>
<dbReference type="PANTHER" id="PTHR14911">
    <property type="entry name" value="THUMP DOMAIN-CONTAINING"/>
    <property type="match status" value="1"/>
</dbReference>
<dbReference type="PANTHER" id="PTHR14911:SF13">
    <property type="entry name" value="TRNA (GUANINE(6)-N2)-METHYLTRANSFERASE THUMP3"/>
    <property type="match status" value="1"/>
</dbReference>
<dbReference type="Pfam" id="PF02926">
    <property type="entry name" value="THUMP"/>
    <property type="match status" value="1"/>
</dbReference>
<dbReference type="Pfam" id="PF01170">
    <property type="entry name" value="UPF0020"/>
    <property type="match status" value="1"/>
</dbReference>
<dbReference type="SMART" id="SM00981">
    <property type="entry name" value="THUMP"/>
    <property type="match status" value="1"/>
</dbReference>
<dbReference type="SUPFAM" id="SSF53335">
    <property type="entry name" value="S-adenosyl-L-methionine-dependent methyltransferases"/>
    <property type="match status" value="1"/>
</dbReference>
<dbReference type="SUPFAM" id="SSF143437">
    <property type="entry name" value="THUMP domain-like"/>
    <property type="match status" value="1"/>
</dbReference>
<dbReference type="PROSITE" id="PS51165">
    <property type="entry name" value="THUMP"/>
    <property type="match status" value="1"/>
</dbReference>
<dbReference type="PROSITE" id="PS01261">
    <property type="entry name" value="UPF0020"/>
    <property type="match status" value="1"/>
</dbReference>
<organism>
    <name type="scientific">Homo sapiens</name>
    <name type="common">Human</name>
    <dbReference type="NCBI Taxonomy" id="9606"/>
    <lineage>
        <taxon>Eukaryota</taxon>
        <taxon>Metazoa</taxon>
        <taxon>Chordata</taxon>
        <taxon>Craniata</taxon>
        <taxon>Vertebrata</taxon>
        <taxon>Euteleostomi</taxon>
        <taxon>Mammalia</taxon>
        <taxon>Eutheria</taxon>
        <taxon>Euarchontoglires</taxon>
        <taxon>Primates</taxon>
        <taxon>Haplorrhini</taxon>
        <taxon>Catarrhini</taxon>
        <taxon>Hominidae</taxon>
        <taxon>Homo</taxon>
    </lineage>
</organism>
<comment type="function">
    <text evidence="3 5">Catalytic subunit of the THUMPD3-TRM112 methyltransferase complex, that specifically mediates the S-adenosyl-L-methionine-dependent N(2)-methylation of guanosine nucleotide at position 6 (m2G6) in tRNAs (PubMed:34669960, PubMed:37283053). This is one of the major tRNA (guanine-N(2))-methyltransferases (PubMed:37283053). Also catalyzes the S-adenosyl-L-methionine-dependent N(2)-methylation of guanosine nucleotide at position 7 of tRNA(Trp) (PubMed:34669960).</text>
</comment>
<comment type="catalytic activity">
    <reaction evidence="3 5">
        <text>guanosine(6) in tRNA + S-adenosyl-L-methionine = N(2)-methylguanosine(6) in tRNA + S-adenosyl-L-homocysteine + H(+)</text>
        <dbReference type="Rhea" id="RHEA:51116"/>
        <dbReference type="Rhea" id="RHEA-COMP:12888"/>
        <dbReference type="Rhea" id="RHEA-COMP:12889"/>
        <dbReference type="ChEBI" id="CHEBI:15378"/>
        <dbReference type="ChEBI" id="CHEBI:57856"/>
        <dbReference type="ChEBI" id="CHEBI:59789"/>
        <dbReference type="ChEBI" id="CHEBI:74269"/>
        <dbReference type="ChEBI" id="CHEBI:74481"/>
        <dbReference type="EC" id="2.1.1.256"/>
    </reaction>
    <physiologicalReaction direction="left-to-right" evidence="5">
        <dbReference type="Rhea" id="RHEA:51117"/>
    </physiologicalReaction>
</comment>
<comment type="catalytic activity">
    <reaction evidence="3">
        <text>guanosine(7) in tRNA + S-adenosyl-L-methionine = N(2)-methylguanosine(7) in tRNA + S-adenosyl-L-homocysteine + H(+)</text>
        <dbReference type="Rhea" id="RHEA:83419"/>
        <dbReference type="Rhea" id="RHEA-COMP:20126"/>
        <dbReference type="Rhea" id="RHEA-COMP:20127"/>
        <dbReference type="ChEBI" id="CHEBI:15378"/>
        <dbReference type="ChEBI" id="CHEBI:57856"/>
        <dbReference type="ChEBI" id="CHEBI:59789"/>
        <dbReference type="ChEBI" id="CHEBI:74269"/>
        <dbReference type="ChEBI" id="CHEBI:74481"/>
    </reaction>
    <physiologicalReaction direction="left-to-right" evidence="3">
        <dbReference type="Rhea" id="RHEA:83420"/>
    </physiologicalReaction>
</comment>
<comment type="subunit">
    <text evidence="3 4 5">Part of the heterodimeric THUMPD3-TRM112 methyltransferase complex; this complex forms an active tRNA methyltransferase, where TRMT112 acts as an activator of the catalytic subunit THUMPD3.</text>
</comment>
<comment type="interaction">
    <interactant intactId="EBI-373253">
        <id>Q9BV44</id>
    </interactant>
    <interactant intactId="EBI-373326">
        <id>Q9UI30</id>
        <label>TRMT112</label>
    </interactant>
    <organismsDiffer>false</organismsDiffer>
    <experiments>10</experiments>
</comment>
<comment type="subcellular location">
    <subcellularLocation>
        <location evidence="3 4">Cytoplasm</location>
    </subcellularLocation>
</comment>
<comment type="similarity">
    <text evidence="7">Belongs to the methyltransferase superfamily.</text>
</comment>
<reference key="1">
    <citation type="journal article" date="2004" name="Nat. Genet.">
        <title>Complete sequencing and characterization of 21,243 full-length human cDNAs.</title>
        <authorList>
            <person name="Ota T."/>
            <person name="Suzuki Y."/>
            <person name="Nishikawa T."/>
            <person name="Otsuki T."/>
            <person name="Sugiyama T."/>
            <person name="Irie R."/>
            <person name="Wakamatsu A."/>
            <person name="Hayashi K."/>
            <person name="Sato H."/>
            <person name="Nagai K."/>
            <person name="Kimura K."/>
            <person name="Makita H."/>
            <person name="Sekine M."/>
            <person name="Obayashi M."/>
            <person name="Nishi T."/>
            <person name="Shibahara T."/>
            <person name="Tanaka T."/>
            <person name="Ishii S."/>
            <person name="Yamamoto J."/>
            <person name="Saito K."/>
            <person name="Kawai Y."/>
            <person name="Isono Y."/>
            <person name="Nakamura Y."/>
            <person name="Nagahari K."/>
            <person name="Murakami K."/>
            <person name="Yasuda T."/>
            <person name="Iwayanagi T."/>
            <person name="Wagatsuma M."/>
            <person name="Shiratori A."/>
            <person name="Sudo H."/>
            <person name="Hosoiri T."/>
            <person name="Kaku Y."/>
            <person name="Kodaira H."/>
            <person name="Kondo H."/>
            <person name="Sugawara M."/>
            <person name="Takahashi M."/>
            <person name="Kanda K."/>
            <person name="Yokoi T."/>
            <person name="Furuya T."/>
            <person name="Kikkawa E."/>
            <person name="Omura Y."/>
            <person name="Abe K."/>
            <person name="Kamihara K."/>
            <person name="Katsuta N."/>
            <person name="Sato K."/>
            <person name="Tanikawa M."/>
            <person name="Yamazaki M."/>
            <person name="Ninomiya K."/>
            <person name="Ishibashi T."/>
            <person name="Yamashita H."/>
            <person name="Murakawa K."/>
            <person name="Fujimori K."/>
            <person name="Tanai H."/>
            <person name="Kimata M."/>
            <person name="Watanabe M."/>
            <person name="Hiraoka S."/>
            <person name="Chiba Y."/>
            <person name="Ishida S."/>
            <person name="Ono Y."/>
            <person name="Takiguchi S."/>
            <person name="Watanabe S."/>
            <person name="Yosida M."/>
            <person name="Hotuta T."/>
            <person name="Kusano J."/>
            <person name="Kanehori K."/>
            <person name="Takahashi-Fujii A."/>
            <person name="Hara H."/>
            <person name="Tanase T.-O."/>
            <person name="Nomura Y."/>
            <person name="Togiya S."/>
            <person name="Komai F."/>
            <person name="Hara R."/>
            <person name="Takeuchi K."/>
            <person name="Arita M."/>
            <person name="Imose N."/>
            <person name="Musashino K."/>
            <person name="Yuuki H."/>
            <person name="Oshima A."/>
            <person name="Sasaki N."/>
            <person name="Aotsuka S."/>
            <person name="Yoshikawa Y."/>
            <person name="Matsunawa H."/>
            <person name="Ichihara T."/>
            <person name="Shiohata N."/>
            <person name="Sano S."/>
            <person name="Moriya S."/>
            <person name="Momiyama H."/>
            <person name="Satoh N."/>
            <person name="Takami S."/>
            <person name="Terashima Y."/>
            <person name="Suzuki O."/>
            <person name="Nakagawa S."/>
            <person name="Senoh A."/>
            <person name="Mizoguchi H."/>
            <person name="Goto Y."/>
            <person name="Shimizu F."/>
            <person name="Wakebe H."/>
            <person name="Hishigaki H."/>
            <person name="Watanabe T."/>
            <person name="Sugiyama A."/>
            <person name="Takemoto M."/>
            <person name="Kawakami B."/>
            <person name="Yamazaki M."/>
            <person name="Watanabe K."/>
            <person name="Kumagai A."/>
            <person name="Itakura S."/>
            <person name="Fukuzumi Y."/>
            <person name="Fujimori Y."/>
            <person name="Komiyama M."/>
            <person name="Tashiro H."/>
            <person name="Tanigami A."/>
            <person name="Fujiwara T."/>
            <person name="Ono T."/>
            <person name="Yamada K."/>
            <person name="Fujii Y."/>
            <person name="Ozaki K."/>
            <person name="Hirao M."/>
            <person name="Ohmori Y."/>
            <person name="Kawabata A."/>
            <person name="Hikiji T."/>
            <person name="Kobatake N."/>
            <person name="Inagaki H."/>
            <person name="Ikema Y."/>
            <person name="Okamoto S."/>
            <person name="Okitani R."/>
            <person name="Kawakami T."/>
            <person name="Noguchi S."/>
            <person name="Itoh T."/>
            <person name="Shigeta K."/>
            <person name="Senba T."/>
            <person name="Matsumura K."/>
            <person name="Nakajima Y."/>
            <person name="Mizuno T."/>
            <person name="Morinaga M."/>
            <person name="Sasaki M."/>
            <person name="Togashi T."/>
            <person name="Oyama M."/>
            <person name="Hata H."/>
            <person name="Watanabe M."/>
            <person name="Komatsu T."/>
            <person name="Mizushima-Sugano J."/>
            <person name="Satoh T."/>
            <person name="Shirai Y."/>
            <person name="Takahashi Y."/>
            <person name="Nakagawa K."/>
            <person name="Okumura K."/>
            <person name="Nagase T."/>
            <person name="Nomura N."/>
            <person name="Kikuchi H."/>
            <person name="Masuho Y."/>
            <person name="Yamashita R."/>
            <person name="Nakai K."/>
            <person name="Yada T."/>
            <person name="Nakamura Y."/>
            <person name="Ohara O."/>
            <person name="Isogai T."/>
            <person name="Sugano S."/>
        </authorList>
    </citation>
    <scope>NUCLEOTIDE SEQUENCE [LARGE SCALE MRNA]</scope>
    <scope>VARIANT GLN-459</scope>
</reference>
<reference key="2">
    <citation type="journal article" date="2004" name="Genome Res.">
        <title>The status, quality, and expansion of the NIH full-length cDNA project: the Mammalian Gene Collection (MGC).</title>
        <authorList>
            <consortium name="The MGC Project Team"/>
        </authorList>
    </citation>
    <scope>NUCLEOTIDE SEQUENCE [LARGE SCALE MRNA]</scope>
    <source>
        <tissue>Eye</tissue>
        <tissue>Placenta</tissue>
    </source>
</reference>
<reference key="3">
    <citation type="journal article" date="2007" name="BMC Genomics">
        <title>The full-ORF clone resource of the German cDNA consortium.</title>
        <authorList>
            <person name="Bechtel S."/>
            <person name="Rosenfelder H."/>
            <person name="Duda A."/>
            <person name="Schmidt C.P."/>
            <person name="Ernst U."/>
            <person name="Wellenreuther R."/>
            <person name="Mehrle A."/>
            <person name="Schuster C."/>
            <person name="Bahr A."/>
            <person name="Bloecker H."/>
            <person name="Heubner D."/>
            <person name="Hoerlein A."/>
            <person name="Michel G."/>
            <person name="Wedler H."/>
            <person name="Koehrer K."/>
            <person name="Ottenwaelder B."/>
            <person name="Poustka A."/>
            <person name="Wiemann S."/>
            <person name="Schupp I."/>
        </authorList>
    </citation>
    <scope>NUCLEOTIDE SEQUENCE [LARGE SCALE MRNA] OF 144-507</scope>
    <source>
        <tissue>Testis</tissue>
    </source>
</reference>
<reference key="4">
    <citation type="journal article" date="2011" name="BMC Syst. Biol.">
        <title>Initial characterization of the human central proteome.</title>
        <authorList>
            <person name="Burkard T.R."/>
            <person name="Planyavsky M."/>
            <person name="Kaupe I."/>
            <person name="Breitwieser F.P."/>
            <person name="Buerckstuemmer T."/>
            <person name="Bennett K.L."/>
            <person name="Superti-Furga G."/>
            <person name="Colinge J."/>
        </authorList>
    </citation>
    <scope>IDENTIFICATION BY MASS SPECTROMETRY [LARGE SCALE ANALYSIS]</scope>
</reference>
<reference key="5">
    <citation type="journal article" date="2014" name="J. Proteomics">
        <title>An enzyme assisted RP-RPLC approach for in-depth analysis of human liver phosphoproteome.</title>
        <authorList>
            <person name="Bian Y."/>
            <person name="Song C."/>
            <person name="Cheng K."/>
            <person name="Dong M."/>
            <person name="Wang F."/>
            <person name="Huang J."/>
            <person name="Sun D."/>
            <person name="Wang L."/>
            <person name="Ye M."/>
            <person name="Zou H."/>
        </authorList>
    </citation>
    <scope>IDENTIFICATION BY MASS SPECTROMETRY [LARGE SCALE ANALYSIS]</scope>
    <source>
        <tissue>Liver</tissue>
    </source>
</reference>
<reference key="6">
    <citation type="journal article" date="2021" name="Int. J. Mol. Sci.">
        <title>Human TRMT112-Methyltransferase Network Consists of Seven Partners Interacting with a Common Co-Factor.</title>
        <authorList>
            <person name="Brumele B."/>
            <person name="Mutso M."/>
            <person name="Telanne L."/>
            <person name="Ounap K."/>
            <person name="Spunde K."/>
            <person name="Abroi A."/>
            <person name="Kurg R."/>
        </authorList>
    </citation>
    <scope>IDENTIFICATION IN THE THUMPD3-TRM112 METHYLTRANSFERASE COMPLEX</scope>
    <scope>SUBCELLULAR LOCATION</scope>
</reference>
<reference key="7">
    <citation type="journal article" date="2021" name="Nucleic Acids Res.">
        <title>THUMPD3-TRMT112 is a m2G methyltransferase working on a broad range of tRNA substrates.</title>
        <authorList>
            <person name="Yang W.Q."/>
            <person name="Xiong Q.P."/>
            <person name="Ge J.Y."/>
            <person name="Li H."/>
            <person name="Zhu W.Y."/>
            <person name="Nie Y."/>
            <person name="Lin X."/>
            <person name="Lv D."/>
            <person name="Li J."/>
            <person name="Lin H."/>
            <person name="Liu R.J."/>
        </authorList>
    </citation>
    <scope>FUNCTION</scope>
    <scope>CATALYTIC ACTIVITY</scope>
    <scope>IDENTIFICATION IN THE THUMPD3-TRM112 METHYLTRANSFERASE COMPLEX</scope>
    <scope>SUBCELLULAR LOCATION</scope>
</reference>
<reference key="8">
    <citation type="journal article" date="2023" name="Nucleic Acids Res.">
        <title>N 2-methylguanosine modifications on human tRNAs and snRNA U6 are important for cell proliferation, protein translation and pre-mRNA splicing.</title>
        <authorList>
            <person name="Wang C."/>
            <person name="Ulryck N."/>
            <person name="Herzel L."/>
            <person name="Pythoud N."/>
            <person name="Kleiber N."/>
            <person name="Guerineau V."/>
            <person name="Jactel V."/>
            <person name="Moritz C."/>
            <person name="Bohnsack M.T."/>
            <person name="Carapito C."/>
            <person name="Touboul D."/>
            <person name="Bohnsack K.E."/>
            <person name="Graille M."/>
        </authorList>
    </citation>
    <scope>FUNCTION</scope>
    <scope>CATALYTIC ACTIVITY</scope>
    <scope>IDENTIFICATION IN THE THUMPD3-TRM112 METHYLTRANSFERASE COMPLEX</scope>
</reference>
<name>THUM3_HUMAN</name>
<accession>Q9BV44</accession>
<accession>Q9H8V6</accession>
<accession>Q9NVC1</accession>
<accession>Q9UFS3</accession>
<gene>
    <name evidence="9" type="primary">THUMPD3</name>
</gene>
<evidence type="ECO:0000255" key="1">
    <source>
        <dbReference type="PROSITE-ProRule" id="PRU00529"/>
    </source>
</evidence>
<evidence type="ECO:0000269" key="2">
    <source>
    </source>
</evidence>
<evidence type="ECO:0000269" key="3">
    <source>
    </source>
</evidence>
<evidence type="ECO:0000269" key="4">
    <source>
    </source>
</evidence>
<evidence type="ECO:0000269" key="5">
    <source>
    </source>
</evidence>
<evidence type="ECO:0000303" key="6">
    <source>
    </source>
</evidence>
<evidence type="ECO:0000305" key="7"/>
<evidence type="ECO:0000305" key="8">
    <source>
    </source>
</evidence>
<evidence type="ECO:0000312" key="9">
    <source>
        <dbReference type="HGNC" id="HGNC:24493"/>
    </source>
</evidence>
<keyword id="KW-0963">Cytoplasm</keyword>
<keyword id="KW-0489">Methyltransferase</keyword>
<keyword id="KW-1267">Proteomics identification</keyword>
<keyword id="KW-1185">Reference proteome</keyword>
<keyword id="KW-0694">RNA-binding</keyword>
<keyword id="KW-0949">S-adenosyl-L-methionine</keyword>
<keyword id="KW-0808">Transferase</keyword>
<keyword id="KW-0819">tRNA processing</keyword>
<keyword id="KW-0820">tRNA-binding</keyword>